<organism>
    <name type="scientific">Pseudomonas putida (strain GB-1)</name>
    <dbReference type="NCBI Taxonomy" id="76869"/>
    <lineage>
        <taxon>Bacteria</taxon>
        <taxon>Pseudomonadati</taxon>
        <taxon>Pseudomonadota</taxon>
        <taxon>Gammaproteobacteria</taxon>
        <taxon>Pseudomonadales</taxon>
        <taxon>Pseudomonadaceae</taxon>
        <taxon>Pseudomonas</taxon>
    </lineage>
</organism>
<comment type="function">
    <text evidence="1">Catalyzes the conversion of uracil and 5-phospho-alpha-D-ribose 1-diphosphate (PRPP) to UMP and diphosphate.</text>
</comment>
<comment type="catalytic activity">
    <reaction evidence="1">
        <text>UMP + diphosphate = 5-phospho-alpha-D-ribose 1-diphosphate + uracil</text>
        <dbReference type="Rhea" id="RHEA:13017"/>
        <dbReference type="ChEBI" id="CHEBI:17568"/>
        <dbReference type="ChEBI" id="CHEBI:33019"/>
        <dbReference type="ChEBI" id="CHEBI:57865"/>
        <dbReference type="ChEBI" id="CHEBI:58017"/>
        <dbReference type="EC" id="2.4.2.9"/>
    </reaction>
</comment>
<comment type="cofactor">
    <cofactor evidence="1">
        <name>Mg(2+)</name>
        <dbReference type="ChEBI" id="CHEBI:18420"/>
    </cofactor>
    <text evidence="1">Binds 1 Mg(2+) ion per subunit. The magnesium is bound as Mg-PRPP.</text>
</comment>
<comment type="activity regulation">
    <text evidence="1">Allosterically activated by GTP.</text>
</comment>
<comment type="pathway">
    <text evidence="1">Pyrimidine metabolism; UMP biosynthesis via salvage pathway; UMP from uracil: step 1/1.</text>
</comment>
<comment type="similarity">
    <text evidence="1">Belongs to the UPRTase family.</text>
</comment>
<accession>B0KNF7</accession>
<sequence>MPTREIRHPLIRHKLGLMRRADISTKNFRELAQEVGALLTYEATQDLPLETYEIDGWCGKVSVEKIAGKKITVVPILRAGIGMLDGVLSLIPGAKVSAVGVARNEETLEAHTYLEKLAPDINQRLALIIDPMLATGGSMVATIDLLKKAGCKEIRAMVLVAAPEGIEVVEKAHPDVKIYTASIDQRLNEHGYIVPGLGDAGDKIFGTKQKDA</sequence>
<evidence type="ECO:0000255" key="1">
    <source>
        <dbReference type="HAMAP-Rule" id="MF_01218"/>
    </source>
</evidence>
<feature type="chain" id="PRO_1000085631" description="Uracil phosphoribosyltransferase">
    <location>
        <begin position="1"/>
        <end position="212"/>
    </location>
</feature>
<feature type="binding site" evidence="1">
    <location>
        <position position="78"/>
    </location>
    <ligand>
        <name>5-phospho-alpha-D-ribose 1-diphosphate</name>
        <dbReference type="ChEBI" id="CHEBI:58017"/>
    </ligand>
</feature>
<feature type="binding site" evidence="1">
    <location>
        <position position="103"/>
    </location>
    <ligand>
        <name>5-phospho-alpha-D-ribose 1-diphosphate</name>
        <dbReference type="ChEBI" id="CHEBI:58017"/>
    </ligand>
</feature>
<feature type="binding site" evidence="1">
    <location>
        <begin position="130"/>
        <end position="138"/>
    </location>
    <ligand>
        <name>5-phospho-alpha-D-ribose 1-diphosphate</name>
        <dbReference type="ChEBI" id="CHEBI:58017"/>
    </ligand>
</feature>
<feature type="binding site" evidence="1">
    <location>
        <position position="193"/>
    </location>
    <ligand>
        <name>uracil</name>
        <dbReference type="ChEBI" id="CHEBI:17568"/>
    </ligand>
</feature>
<feature type="binding site" evidence="1">
    <location>
        <begin position="198"/>
        <end position="200"/>
    </location>
    <ligand>
        <name>uracil</name>
        <dbReference type="ChEBI" id="CHEBI:17568"/>
    </ligand>
</feature>
<feature type="binding site" evidence="1">
    <location>
        <position position="199"/>
    </location>
    <ligand>
        <name>5-phospho-alpha-D-ribose 1-diphosphate</name>
        <dbReference type="ChEBI" id="CHEBI:58017"/>
    </ligand>
</feature>
<protein>
    <recommendedName>
        <fullName evidence="1">Uracil phosphoribosyltransferase</fullName>
        <ecNumber evidence="1">2.4.2.9</ecNumber>
    </recommendedName>
    <alternativeName>
        <fullName evidence="1">UMP pyrophosphorylase</fullName>
    </alternativeName>
    <alternativeName>
        <fullName evidence="1">UPRTase</fullName>
    </alternativeName>
</protein>
<reference key="1">
    <citation type="submission" date="2008-01" db="EMBL/GenBank/DDBJ databases">
        <title>Complete sequence of Pseudomonas putida GB-1.</title>
        <authorList>
            <consortium name="US DOE Joint Genome Institute"/>
            <person name="Copeland A."/>
            <person name="Lucas S."/>
            <person name="Lapidus A."/>
            <person name="Barry K."/>
            <person name="Glavina del Rio T."/>
            <person name="Dalin E."/>
            <person name="Tice H."/>
            <person name="Pitluck S."/>
            <person name="Bruce D."/>
            <person name="Goodwin L."/>
            <person name="Chertkov O."/>
            <person name="Brettin T."/>
            <person name="Detter J.C."/>
            <person name="Han C."/>
            <person name="Kuske C.R."/>
            <person name="Schmutz J."/>
            <person name="Larimer F."/>
            <person name="Land M."/>
            <person name="Hauser L."/>
            <person name="Kyrpides N."/>
            <person name="Kim E."/>
            <person name="McCarthy J.K."/>
            <person name="Richardson P."/>
        </authorList>
    </citation>
    <scope>NUCLEOTIDE SEQUENCE [LARGE SCALE GENOMIC DNA]</scope>
    <source>
        <strain>GB-1</strain>
    </source>
</reference>
<proteinExistence type="inferred from homology"/>
<keyword id="KW-0021">Allosteric enzyme</keyword>
<keyword id="KW-0328">Glycosyltransferase</keyword>
<keyword id="KW-0342">GTP-binding</keyword>
<keyword id="KW-0460">Magnesium</keyword>
<keyword id="KW-0547">Nucleotide-binding</keyword>
<keyword id="KW-0808">Transferase</keyword>
<gene>
    <name evidence="1" type="primary">upp</name>
    <name type="ordered locus">PputGB1_0787</name>
</gene>
<name>UPP_PSEPG</name>
<dbReference type="EC" id="2.4.2.9" evidence="1"/>
<dbReference type="EMBL" id="CP000926">
    <property type="protein sequence ID" value="ABY96697.1"/>
    <property type="molecule type" value="Genomic_DNA"/>
</dbReference>
<dbReference type="RefSeq" id="WP_003247366.1">
    <property type="nucleotide sequence ID" value="NC_010322.1"/>
</dbReference>
<dbReference type="SMR" id="B0KNF7"/>
<dbReference type="KEGG" id="ppg:PputGB1_0787"/>
<dbReference type="eggNOG" id="COG0035">
    <property type="taxonomic scope" value="Bacteria"/>
</dbReference>
<dbReference type="HOGENOM" id="CLU_067096_2_2_6"/>
<dbReference type="UniPathway" id="UPA00574">
    <property type="reaction ID" value="UER00636"/>
</dbReference>
<dbReference type="Proteomes" id="UP000002157">
    <property type="component" value="Chromosome"/>
</dbReference>
<dbReference type="GO" id="GO:0005525">
    <property type="term" value="F:GTP binding"/>
    <property type="evidence" value="ECO:0007669"/>
    <property type="project" value="UniProtKB-KW"/>
</dbReference>
<dbReference type="GO" id="GO:0000287">
    <property type="term" value="F:magnesium ion binding"/>
    <property type="evidence" value="ECO:0007669"/>
    <property type="project" value="UniProtKB-UniRule"/>
</dbReference>
<dbReference type="GO" id="GO:0004845">
    <property type="term" value="F:uracil phosphoribosyltransferase activity"/>
    <property type="evidence" value="ECO:0007669"/>
    <property type="project" value="UniProtKB-UniRule"/>
</dbReference>
<dbReference type="GO" id="GO:0044206">
    <property type="term" value="P:UMP salvage"/>
    <property type="evidence" value="ECO:0007669"/>
    <property type="project" value="UniProtKB-UniRule"/>
</dbReference>
<dbReference type="GO" id="GO:0006223">
    <property type="term" value="P:uracil salvage"/>
    <property type="evidence" value="ECO:0007669"/>
    <property type="project" value="InterPro"/>
</dbReference>
<dbReference type="CDD" id="cd06223">
    <property type="entry name" value="PRTases_typeI"/>
    <property type="match status" value="1"/>
</dbReference>
<dbReference type="FunFam" id="3.40.50.2020:FF:000003">
    <property type="entry name" value="Uracil phosphoribosyltransferase"/>
    <property type="match status" value="1"/>
</dbReference>
<dbReference type="Gene3D" id="3.40.50.2020">
    <property type="match status" value="1"/>
</dbReference>
<dbReference type="HAMAP" id="MF_01218_B">
    <property type="entry name" value="Upp_B"/>
    <property type="match status" value="1"/>
</dbReference>
<dbReference type="InterPro" id="IPR000836">
    <property type="entry name" value="PRibTrfase_dom"/>
</dbReference>
<dbReference type="InterPro" id="IPR029057">
    <property type="entry name" value="PRTase-like"/>
</dbReference>
<dbReference type="InterPro" id="IPR034332">
    <property type="entry name" value="Upp_B"/>
</dbReference>
<dbReference type="InterPro" id="IPR050054">
    <property type="entry name" value="UPRTase/APRTase"/>
</dbReference>
<dbReference type="InterPro" id="IPR005765">
    <property type="entry name" value="Ura_phspho_trans"/>
</dbReference>
<dbReference type="NCBIfam" id="NF001097">
    <property type="entry name" value="PRK00129.1"/>
    <property type="match status" value="1"/>
</dbReference>
<dbReference type="NCBIfam" id="TIGR01091">
    <property type="entry name" value="upp"/>
    <property type="match status" value="1"/>
</dbReference>
<dbReference type="PANTHER" id="PTHR32315">
    <property type="entry name" value="ADENINE PHOSPHORIBOSYLTRANSFERASE"/>
    <property type="match status" value="1"/>
</dbReference>
<dbReference type="PANTHER" id="PTHR32315:SF4">
    <property type="entry name" value="URACIL PHOSPHORIBOSYLTRANSFERASE, CHLOROPLASTIC"/>
    <property type="match status" value="1"/>
</dbReference>
<dbReference type="Pfam" id="PF14681">
    <property type="entry name" value="UPRTase"/>
    <property type="match status" value="1"/>
</dbReference>
<dbReference type="SUPFAM" id="SSF53271">
    <property type="entry name" value="PRTase-like"/>
    <property type="match status" value="1"/>
</dbReference>